<feature type="chain" id="PRO_0000141130" description="Ribose-phosphate pyrophosphokinase">
    <location>
        <begin position="1"/>
        <end position="325"/>
    </location>
</feature>
<feature type="active site" evidence="1">
    <location>
        <position position="202"/>
    </location>
</feature>
<feature type="binding site" evidence="1">
    <location>
        <begin position="45"/>
        <end position="47"/>
    </location>
    <ligand>
        <name>ATP</name>
        <dbReference type="ChEBI" id="CHEBI:30616"/>
    </ligand>
</feature>
<feature type="binding site" evidence="1">
    <location>
        <begin position="104"/>
        <end position="105"/>
    </location>
    <ligand>
        <name>ATP</name>
        <dbReference type="ChEBI" id="CHEBI:30616"/>
    </ligand>
</feature>
<feature type="binding site" evidence="1">
    <location>
        <position position="138"/>
    </location>
    <ligand>
        <name>Mg(2+)</name>
        <dbReference type="ChEBI" id="CHEBI:18420"/>
        <label>1</label>
    </ligand>
</feature>
<feature type="binding site" evidence="1">
    <location>
        <position position="178"/>
    </location>
    <ligand>
        <name>Mg(2+)</name>
        <dbReference type="ChEBI" id="CHEBI:18420"/>
        <label>2</label>
    </ligand>
</feature>
<feature type="binding site" evidence="1">
    <location>
        <position position="204"/>
    </location>
    <ligand>
        <name>D-ribose 5-phosphate</name>
        <dbReference type="ChEBI" id="CHEBI:78346"/>
    </ligand>
</feature>
<feature type="binding site" evidence="1">
    <location>
        <position position="230"/>
    </location>
    <ligand>
        <name>D-ribose 5-phosphate</name>
        <dbReference type="ChEBI" id="CHEBI:78346"/>
    </ligand>
</feature>
<feature type="binding site" evidence="1">
    <location>
        <begin position="234"/>
        <end position="238"/>
    </location>
    <ligand>
        <name>D-ribose 5-phosphate</name>
        <dbReference type="ChEBI" id="CHEBI:78346"/>
    </ligand>
</feature>
<name>KPRS_COREF</name>
<keyword id="KW-0067">ATP-binding</keyword>
<keyword id="KW-0963">Cytoplasm</keyword>
<keyword id="KW-0418">Kinase</keyword>
<keyword id="KW-0460">Magnesium</keyword>
<keyword id="KW-0479">Metal-binding</keyword>
<keyword id="KW-0545">Nucleotide biosynthesis</keyword>
<keyword id="KW-0547">Nucleotide-binding</keyword>
<keyword id="KW-1185">Reference proteome</keyword>
<keyword id="KW-0808">Transferase</keyword>
<gene>
    <name evidence="1" type="primary">prs</name>
    <name type="ordered locus">CE1015</name>
</gene>
<protein>
    <recommendedName>
        <fullName evidence="1">Ribose-phosphate pyrophosphokinase</fullName>
        <shortName evidence="1">RPPK</shortName>
        <ecNumber evidence="1">2.7.6.1</ecNumber>
    </recommendedName>
    <alternativeName>
        <fullName evidence="1">5-phospho-D-ribosyl alpha-1-diphosphate synthase</fullName>
    </alternativeName>
    <alternativeName>
        <fullName evidence="1">Phosphoribosyl diphosphate synthase</fullName>
    </alternativeName>
    <alternativeName>
        <fullName evidence="1">Phosphoribosyl pyrophosphate synthase</fullName>
        <shortName evidence="1">P-Rib-PP synthase</shortName>
        <shortName evidence="1">PRPP synthase</shortName>
        <shortName evidence="1">PRPPase</shortName>
    </alternativeName>
</protein>
<reference key="1">
    <citation type="journal article" date="2003" name="Genome Res.">
        <title>Comparative complete genome sequence analysis of the amino acid replacements responsible for the thermostability of Corynebacterium efficiens.</title>
        <authorList>
            <person name="Nishio Y."/>
            <person name="Nakamura Y."/>
            <person name="Kawarabayasi Y."/>
            <person name="Usuda Y."/>
            <person name="Kimura E."/>
            <person name="Sugimoto S."/>
            <person name="Matsui K."/>
            <person name="Yamagishi A."/>
            <person name="Kikuchi H."/>
            <person name="Ikeo K."/>
            <person name="Gojobori T."/>
        </authorList>
    </citation>
    <scope>NUCLEOTIDE SEQUENCE [LARGE SCALE GENOMIC DNA]</scope>
    <source>
        <strain>DSM 44549 / YS-314 / AJ 12310 / JCM 11189 / NBRC 100395</strain>
    </source>
</reference>
<organism>
    <name type="scientific">Corynebacterium efficiens (strain DSM 44549 / YS-314 / AJ 12310 / JCM 11189 / NBRC 100395)</name>
    <dbReference type="NCBI Taxonomy" id="196164"/>
    <lineage>
        <taxon>Bacteria</taxon>
        <taxon>Bacillati</taxon>
        <taxon>Actinomycetota</taxon>
        <taxon>Actinomycetes</taxon>
        <taxon>Mycobacteriales</taxon>
        <taxon>Corynebacteriaceae</taxon>
        <taxon>Corynebacterium</taxon>
    </lineage>
</organism>
<sequence length="325" mass="35567">MTAHWKENHKNLMLFSGRAHPELAEAVARDLEVEVTPMTARDFANGEIYVRFEESVRGSDCFVIQSHTQPLNKWLMEQLLMIDALKRGSAKRITAILPFYPYARQDKKHRGREPISARLIADLLQTAGADRIVSVDLHTDQIQGFFDGPVDHMHAMPILTDYIKDKYDLSNIVVVSPDAGRVKVAEKWANTLGDAPMAFVHKTRSTEVANEVVANRVVGDVAGKDCVLLDDMIDTGGTIAGAVGVLKEAGARSVVIACTHGVFSDPARERLSSCGAEEVITTDTLPQSTEGWSNLTVLPIAPLLARTISEIFENGSVTTLFEGDA</sequence>
<comment type="function">
    <text evidence="1">Involved in the biosynthesis of the central metabolite phospho-alpha-D-ribosyl-1-pyrophosphate (PRPP) via the transfer of pyrophosphoryl group from ATP to 1-hydroxyl of ribose-5-phosphate (Rib-5-P).</text>
</comment>
<comment type="catalytic activity">
    <reaction evidence="1">
        <text>D-ribose 5-phosphate + ATP = 5-phospho-alpha-D-ribose 1-diphosphate + AMP + H(+)</text>
        <dbReference type="Rhea" id="RHEA:15609"/>
        <dbReference type="ChEBI" id="CHEBI:15378"/>
        <dbReference type="ChEBI" id="CHEBI:30616"/>
        <dbReference type="ChEBI" id="CHEBI:58017"/>
        <dbReference type="ChEBI" id="CHEBI:78346"/>
        <dbReference type="ChEBI" id="CHEBI:456215"/>
        <dbReference type="EC" id="2.7.6.1"/>
    </reaction>
</comment>
<comment type="cofactor">
    <cofactor evidence="1">
        <name>Mg(2+)</name>
        <dbReference type="ChEBI" id="CHEBI:18420"/>
    </cofactor>
    <text evidence="1">Binds 2 Mg(2+) ions per subunit.</text>
</comment>
<comment type="pathway">
    <text evidence="1">Metabolic intermediate biosynthesis; 5-phospho-alpha-D-ribose 1-diphosphate biosynthesis; 5-phospho-alpha-D-ribose 1-diphosphate from D-ribose 5-phosphate (route I): step 1/1.</text>
</comment>
<comment type="subunit">
    <text evidence="1">Homohexamer.</text>
</comment>
<comment type="subcellular location">
    <subcellularLocation>
        <location evidence="1">Cytoplasm</location>
    </subcellularLocation>
</comment>
<comment type="similarity">
    <text evidence="1">Belongs to the ribose-phosphate pyrophosphokinase family. Class I subfamily.</text>
</comment>
<evidence type="ECO:0000255" key="1">
    <source>
        <dbReference type="HAMAP-Rule" id="MF_00583"/>
    </source>
</evidence>
<proteinExistence type="inferred from homology"/>
<dbReference type="EC" id="2.7.6.1" evidence="1"/>
<dbReference type="EMBL" id="BA000035">
    <property type="protein sequence ID" value="BAC17825.1"/>
    <property type="molecule type" value="Genomic_DNA"/>
</dbReference>
<dbReference type="RefSeq" id="WP_006770022.1">
    <property type="nucleotide sequence ID" value="NC_004369.1"/>
</dbReference>
<dbReference type="SMR" id="Q8FQV2"/>
<dbReference type="STRING" id="196164.gene:10741421"/>
<dbReference type="KEGG" id="cef:CE1015"/>
<dbReference type="eggNOG" id="COG0462">
    <property type="taxonomic scope" value="Bacteria"/>
</dbReference>
<dbReference type="HOGENOM" id="CLU_033546_2_0_11"/>
<dbReference type="OrthoDB" id="9777067at2"/>
<dbReference type="UniPathway" id="UPA00087">
    <property type="reaction ID" value="UER00172"/>
</dbReference>
<dbReference type="Proteomes" id="UP000001409">
    <property type="component" value="Chromosome"/>
</dbReference>
<dbReference type="GO" id="GO:0005737">
    <property type="term" value="C:cytoplasm"/>
    <property type="evidence" value="ECO:0007669"/>
    <property type="project" value="UniProtKB-SubCell"/>
</dbReference>
<dbReference type="GO" id="GO:0002189">
    <property type="term" value="C:ribose phosphate diphosphokinase complex"/>
    <property type="evidence" value="ECO:0007669"/>
    <property type="project" value="TreeGrafter"/>
</dbReference>
<dbReference type="GO" id="GO:0005524">
    <property type="term" value="F:ATP binding"/>
    <property type="evidence" value="ECO:0007669"/>
    <property type="project" value="UniProtKB-KW"/>
</dbReference>
<dbReference type="GO" id="GO:0016301">
    <property type="term" value="F:kinase activity"/>
    <property type="evidence" value="ECO:0007669"/>
    <property type="project" value="UniProtKB-KW"/>
</dbReference>
<dbReference type="GO" id="GO:0000287">
    <property type="term" value="F:magnesium ion binding"/>
    <property type="evidence" value="ECO:0007669"/>
    <property type="project" value="UniProtKB-UniRule"/>
</dbReference>
<dbReference type="GO" id="GO:0004749">
    <property type="term" value="F:ribose phosphate diphosphokinase activity"/>
    <property type="evidence" value="ECO:0007669"/>
    <property type="project" value="UniProtKB-UniRule"/>
</dbReference>
<dbReference type="GO" id="GO:0006015">
    <property type="term" value="P:5-phosphoribose 1-diphosphate biosynthetic process"/>
    <property type="evidence" value="ECO:0007669"/>
    <property type="project" value="UniProtKB-UniRule"/>
</dbReference>
<dbReference type="GO" id="GO:0006164">
    <property type="term" value="P:purine nucleotide biosynthetic process"/>
    <property type="evidence" value="ECO:0007669"/>
    <property type="project" value="TreeGrafter"/>
</dbReference>
<dbReference type="GO" id="GO:0009156">
    <property type="term" value="P:ribonucleoside monophosphate biosynthetic process"/>
    <property type="evidence" value="ECO:0007669"/>
    <property type="project" value="InterPro"/>
</dbReference>
<dbReference type="CDD" id="cd06223">
    <property type="entry name" value="PRTases_typeI"/>
    <property type="match status" value="1"/>
</dbReference>
<dbReference type="FunFam" id="3.40.50.2020:FF:000007">
    <property type="entry name" value="Ribose-phosphate pyrophosphokinase"/>
    <property type="match status" value="1"/>
</dbReference>
<dbReference type="Gene3D" id="3.40.50.2020">
    <property type="match status" value="2"/>
</dbReference>
<dbReference type="HAMAP" id="MF_00583_B">
    <property type="entry name" value="RibP_PPkinase_B"/>
    <property type="match status" value="1"/>
</dbReference>
<dbReference type="InterPro" id="IPR000842">
    <property type="entry name" value="PRib_PP_synth_CS"/>
</dbReference>
<dbReference type="InterPro" id="IPR029099">
    <property type="entry name" value="Pribosyltran_N"/>
</dbReference>
<dbReference type="InterPro" id="IPR000836">
    <property type="entry name" value="PRibTrfase_dom"/>
</dbReference>
<dbReference type="InterPro" id="IPR029057">
    <property type="entry name" value="PRTase-like"/>
</dbReference>
<dbReference type="InterPro" id="IPR005946">
    <property type="entry name" value="Rib-P_diPkinase"/>
</dbReference>
<dbReference type="InterPro" id="IPR037515">
    <property type="entry name" value="Rib-P_diPkinase_bac"/>
</dbReference>
<dbReference type="NCBIfam" id="NF002320">
    <property type="entry name" value="PRK01259.1"/>
    <property type="match status" value="1"/>
</dbReference>
<dbReference type="NCBIfam" id="NF002844">
    <property type="entry name" value="PRK03092.1"/>
    <property type="match status" value="1"/>
</dbReference>
<dbReference type="NCBIfam" id="TIGR01251">
    <property type="entry name" value="ribP_PPkin"/>
    <property type="match status" value="1"/>
</dbReference>
<dbReference type="PANTHER" id="PTHR10210">
    <property type="entry name" value="RIBOSE-PHOSPHATE DIPHOSPHOKINASE FAMILY MEMBER"/>
    <property type="match status" value="1"/>
</dbReference>
<dbReference type="PANTHER" id="PTHR10210:SF41">
    <property type="entry name" value="RIBOSE-PHOSPHATE PYROPHOSPHOKINASE 1, CHLOROPLASTIC"/>
    <property type="match status" value="1"/>
</dbReference>
<dbReference type="Pfam" id="PF14572">
    <property type="entry name" value="Pribosyl_synth"/>
    <property type="match status" value="1"/>
</dbReference>
<dbReference type="Pfam" id="PF13793">
    <property type="entry name" value="Pribosyltran_N"/>
    <property type="match status" value="1"/>
</dbReference>
<dbReference type="SMART" id="SM01400">
    <property type="entry name" value="Pribosyltran_N"/>
    <property type="match status" value="1"/>
</dbReference>
<dbReference type="SUPFAM" id="SSF53271">
    <property type="entry name" value="PRTase-like"/>
    <property type="match status" value="1"/>
</dbReference>
<dbReference type="PROSITE" id="PS00114">
    <property type="entry name" value="PRPP_SYNTHASE"/>
    <property type="match status" value="1"/>
</dbReference>
<accession>Q8FQV2</accession>